<gene>
    <name evidence="5" type="primary">SWEET7</name>
    <name type="ordered locus">At4g10850</name>
    <name type="ORF">F25I24.60</name>
    <name type="ORF">F8M12.20</name>
</gene>
<accession>Q8LBF7</accession>
<accession>O81628</accession>
<accession>Q9SN64</accession>
<comment type="function">
    <text evidence="1">Mediates both low-affinity uptake and efflux of sugar across the plasma membrane.</text>
</comment>
<comment type="subunit">
    <text evidence="4">Forms heterooligomers with SWEET8, SWEET11, SWEET13, SWEET16 and SWEET17.</text>
</comment>
<comment type="subcellular location">
    <subcellularLocation>
        <location evidence="1">Cell membrane</location>
        <topology evidence="1">Multi-pass membrane protein</topology>
    </subcellularLocation>
</comment>
<comment type="induction">
    <text evidence="3">Induced by the pathogenic bacteria P.syringae pv. tomato.</text>
</comment>
<comment type="similarity">
    <text evidence="6">Belongs to the SWEET sugar transporter family.</text>
</comment>
<comment type="sequence caution" evidence="6">
    <conflict type="erroneous gene model prediction">
        <sequence resource="EMBL-CDS" id="AAC33960"/>
    </conflict>
</comment>
<comment type="sequence caution" evidence="6">
    <conflict type="erroneous gene model prediction">
        <sequence resource="EMBL-CDS" id="CAB40053"/>
    </conflict>
</comment>
<comment type="sequence caution" evidence="6">
    <conflict type="erroneous gene model prediction">
        <sequence resource="EMBL-CDS" id="CAB81186"/>
    </conflict>
</comment>
<keyword id="KW-1003">Cell membrane</keyword>
<keyword id="KW-0472">Membrane</keyword>
<keyword id="KW-1185">Reference proteome</keyword>
<keyword id="KW-0677">Repeat</keyword>
<keyword id="KW-0762">Sugar transport</keyword>
<keyword id="KW-0812">Transmembrane</keyword>
<keyword id="KW-1133">Transmembrane helix</keyword>
<keyword id="KW-0813">Transport</keyword>
<name>SWET7_ARATH</name>
<reference key="1">
    <citation type="journal article" date="1999" name="Nature">
        <title>Sequence and analysis of chromosome 4 of the plant Arabidopsis thaliana.</title>
        <authorList>
            <person name="Mayer K.F.X."/>
            <person name="Schueller C."/>
            <person name="Wambutt R."/>
            <person name="Murphy G."/>
            <person name="Volckaert G."/>
            <person name="Pohl T."/>
            <person name="Duesterhoeft A."/>
            <person name="Stiekema W."/>
            <person name="Entian K.-D."/>
            <person name="Terryn N."/>
            <person name="Harris B."/>
            <person name="Ansorge W."/>
            <person name="Brandt P."/>
            <person name="Grivell L.A."/>
            <person name="Rieger M."/>
            <person name="Weichselgartner M."/>
            <person name="de Simone V."/>
            <person name="Obermaier B."/>
            <person name="Mache R."/>
            <person name="Mueller M."/>
            <person name="Kreis M."/>
            <person name="Delseny M."/>
            <person name="Puigdomenech P."/>
            <person name="Watson M."/>
            <person name="Schmidtheini T."/>
            <person name="Reichert B."/>
            <person name="Portetelle D."/>
            <person name="Perez-Alonso M."/>
            <person name="Boutry M."/>
            <person name="Bancroft I."/>
            <person name="Vos P."/>
            <person name="Hoheisel J."/>
            <person name="Zimmermann W."/>
            <person name="Wedler H."/>
            <person name="Ridley P."/>
            <person name="Langham S.-A."/>
            <person name="McCullagh B."/>
            <person name="Bilham L."/>
            <person name="Robben J."/>
            <person name="van der Schueren J."/>
            <person name="Grymonprez B."/>
            <person name="Chuang Y.-J."/>
            <person name="Vandenbussche F."/>
            <person name="Braeken M."/>
            <person name="Weltjens I."/>
            <person name="Voet M."/>
            <person name="Bastiaens I."/>
            <person name="Aert R."/>
            <person name="Defoor E."/>
            <person name="Weitzenegger T."/>
            <person name="Bothe G."/>
            <person name="Ramsperger U."/>
            <person name="Hilbert H."/>
            <person name="Braun M."/>
            <person name="Holzer E."/>
            <person name="Brandt A."/>
            <person name="Peters S."/>
            <person name="van Staveren M."/>
            <person name="Dirkse W."/>
            <person name="Mooijman P."/>
            <person name="Klein Lankhorst R."/>
            <person name="Rose M."/>
            <person name="Hauf J."/>
            <person name="Koetter P."/>
            <person name="Berneiser S."/>
            <person name="Hempel S."/>
            <person name="Feldpausch M."/>
            <person name="Lamberth S."/>
            <person name="Van den Daele H."/>
            <person name="De Keyser A."/>
            <person name="Buysshaert C."/>
            <person name="Gielen J."/>
            <person name="Villarroel R."/>
            <person name="De Clercq R."/>
            <person name="van Montagu M."/>
            <person name="Rogers J."/>
            <person name="Cronin A."/>
            <person name="Quail M.A."/>
            <person name="Bray-Allen S."/>
            <person name="Clark L."/>
            <person name="Doggett J."/>
            <person name="Hall S."/>
            <person name="Kay M."/>
            <person name="Lennard N."/>
            <person name="McLay K."/>
            <person name="Mayes R."/>
            <person name="Pettett A."/>
            <person name="Rajandream M.A."/>
            <person name="Lyne M."/>
            <person name="Benes V."/>
            <person name="Rechmann S."/>
            <person name="Borkova D."/>
            <person name="Bloecker H."/>
            <person name="Scharfe M."/>
            <person name="Grimm M."/>
            <person name="Loehnert T.-H."/>
            <person name="Dose S."/>
            <person name="de Haan M."/>
            <person name="Maarse A.C."/>
            <person name="Schaefer M."/>
            <person name="Mueller-Auer S."/>
            <person name="Gabel C."/>
            <person name="Fuchs M."/>
            <person name="Fartmann B."/>
            <person name="Granderath K."/>
            <person name="Dauner D."/>
            <person name="Herzl A."/>
            <person name="Neumann S."/>
            <person name="Argiriou A."/>
            <person name="Vitale D."/>
            <person name="Liguori R."/>
            <person name="Piravandi E."/>
            <person name="Massenet O."/>
            <person name="Quigley F."/>
            <person name="Clabauld G."/>
            <person name="Muendlein A."/>
            <person name="Felber R."/>
            <person name="Schnabl S."/>
            <person name="Hiller R."/>
            <person name="Schmidt W."/>
            <person name="Lecharny A."/>
            <person name="Aubourg S."/>
            <person name="Chefdor F."/>
            <person name="Cooke R."/>
            <person name="Berger C."/>
            <person name="Monfort A."/>
            <person name="Casacuberta E."/>
            <person name="Gibbons T."/>
            <person name="Weber N."/>
            <person name="Vandenbol M."/>
            <person name="Bargues M."/>
            <person name="Terol J."/>
            <person name="Torres A."/>
            <person name="Perez-Perez A."/>
            <person name="Purnelle B."/>
            <person name="Bent E."/>
            <person name="Johnson S."/>
            <person name="Tacon D."/>
            <person name="Jesse T."/>
            <person name="Heijnen L."/>
            <person name="Schwarz S."/>
            <person name="Scholler P."/>
            <person name="Heber S."/>
            <person name="Francs P."/>
            <person name="Bielke C."/>
            <person name="Frishman D."/>
            <person name="Haase D."/>
            <person name="Lemcke K."/>
            <person name="Mewes H.-W."/>
            <person name="Stocker S."/>
            <person name="Zaccaria P."/>
            <person name="Bevan M."/>
            <person name="Wilson R.K."/>
            <person name="de la Bastide M."/>
            <person name="Habermann K."/>
            <person name="Parnell L."/>
            <person name="Dedhia N."/>
            <person name="Gnoj L."/>
            <person name="Schutz K."/>
            <person name="Huang E."/>
            <person name="Spiegel L."/>
            <person name="Sekhon M."/>
            <person name="Murray J."/>
            <person name="Sheet P."/>
            <person name="Cordes M."/>
            <person name="Abu-Threideh J."/>
            <person name="Stoneking T."/>
            <person name="Kalicki J."/>
            <person name="Graves T."/>
            <person name="Harmon G."/>
            <person name="Edwards J."/>
            <person name="Latreille P."/>
            <person name="Courtney L."/>
            <person name="Cloud J."/>
            <person name="Abbott A."/>
            <person name="Scott K."/>
            <person name="Johnson D."/>
            <person name="Minx P."/>
            <person name="Bentley D."/>
            <person name="Fulton B."/>
            <person name="Miller N."/>
            <person name="Greco T."/>
            <person name="Kemp K."/>
            <person name="Kramer J."/>
            <person name="Fulton L."/>
            <person name="Mardis E."/>
            <person name="Dante M."/>
            <person name="Pepin K."/>
            <person name="Hillier L.W."/>
            <person name="Nelson J."/>
            <person name="Spieth J."/>
            <person name="Ryan E."/>
            <person name="Andrews S."/>
            <person name="Geisel C."/>
            <person name="Layman D."/>
            <person name="Du H."/>
            <person name="Ali J."/>
            <person name="Berghoff A."/>
            <person name="Jones K."/>
            <person name="Drone K."/>
            <person name="Cotton M."/>
            <person name="Joshu C."/>
            <person name="Antonoiu B."/>
            <person name="Zidanic M."/>
            <person name="Strong C."/>
            <person name="Sun H."/>
            <person name="Lamar B."/>
            <person name="Yordan C."/>
            <person name="Ma P."/>
            <person name="Zhong J."/>
            <person name="Preston R."/>
            <person name="Vil D."/>
            <person name="Shekher M."/>
            <person name="Matero A."/>
            <person name="Shah R."/>
            <person name="Swaby I.K."/>
            <person name="O'Shaughnessy A."/>
            <person name="Rodriguez M."/>
            <person name="Hoffman J."/>
            <person name="Till S."/>
            <person name="Granat S."/>
            <person name="Shohdy N."/>
            <person name="Hasegawa A."/>
            <person name="Hameed A."/>
            <person name="Lodhi M."/>
            <person name="Johnson A."/>
            <person name="Chen E."/>
            <person name="Marra M.A."/>
            <person name="Martienssen R."/>
            <person name="McCombie W.R."/>
        </authorList>
    </citation>
    <scope>NUCLEOTIDE SEQUENCE [LARGE SCALE GENOMIC DNA]</scope>
    <source>
        <strain>cv. Columbia</strain>
    </source>
</reference>
<reference key="2">
    <citation type="journal article" date="2017" name="Plant J.">
        <title>Araport11: a complete reannotation of the Arabidopsis thaliana reference genome.</title>
        <authorList>
            <person name="Cheng C.Y."/>
            <person name="Krishnakumar V."/>
            <person name="Chan A.P."/>
            <person name="Thibaud-Nissen F."/>
            <person name="Schobel S."/>
            <person name="Town C.D."/>
        </authorList>
    </citation>
    <scope>GENOME REANNOTATION</scope>
    <source>
        <strain>cv. Columbia</strain>
    </source>
</reference>
<reference key="3">
    <citation type="submission" date="2002-03" db="EMBL/GenBank/DDBJ databases">
        <title>Full-length cDNA from Arabidopsis thaliana.</title>
        <authorList>
            <person name="Brover V.V."/>
            <person name="Troukhan M.E."/>
            <person name="Alexandrov N.A."/>
            <person name="Lu Y.-P."/>
            <person name="Flavell R.B."/>
            <person name="Feldmann K.A."/>
        </authorList>
    </citation>
    <scope>NUCLEOTIDE SEQUENCE [LARGE SCALE MRNA]</scope>
    <source>
        <strain>cv. Columbia</strain>
    </source>
</reference>
<reference key="4">
    <citation type="submission" date="2006-11" db="EMBL/GenBank/DDBJ databases">
        <title>Arabidopsis ORF clones.</title>
        <authorList>
            <person name="Bautista V.R."/>
            <person name="Kim C.J."/>
            <person name="Chen H."/>
            <person name="Quinitio C."/>
            <person name="Ecker J.R."/>
        </authorList>
    </citation>
    <scope>NUCLEOTIDE SEQUENCE [LARGE SCALE MRNA]</scope>
    <source>
        <strain>cv. Columbia</strain>
    </source>
</reference>
<reference key="5">
    <citation type="journal article" date="2010" name="Nature">
        <title>Sugar transporters for intercellular exchange and nutrition of pathogens.</title>
        <authorList>
            <person name="Chen L.-Q."/>
            <person name="Hou B.-H."/>
            <person name="Lalonde S."/>
            <person name="Takanaga H."/>
            <person name="Hartung M.L."/>
            <person name="Qu X.-Q."/>
            <person name="Guo W.-J."/>
            <person name="Kim J.-G."/>
            <person name="Underwood W."/>
            <person name="Chaudhuri B."/>
            <person name="Chermak D."/>
            <person name="Antony G."/>
            <person name="White F.F."/>
            <person name="Somerville S.C."/>
            <person name="Mudgett M.B."/>
            <person name="Frommer W.B."/>
        </authorList>
    </citation>
    <scope>INDUCTION BY PATHOGENS</scope>
    <scope>GENE FAMILY</scope>
    <scope>NOMENCLATURE</scope>
    <source>
        <strain>cv. Columbia</strain>
    </source>
</reference>
<reference key="6">
    <citation type="journal article" date="2013" name="Proc. Natl. Acad. Sci. U.S.A.">
        <title>Functional role of oligomerization for bacterial and plant SWEET sugar transporter family.</title>
        <authorList>
            <person name="Xuan Y.H."/>
            <person name="Hu Y.B."/>
            <person name="Chen L.-Q."/>
            <person name="Sosso D."/>
            <person name="Ducat D.C."/>
            <person name="Hou B.-H."/>
            <person name="Frommer W.B."/>
        </authorList>
    </citation>
    <scope>INTERACTION WITH SWEET8; SWEET11; SWEET13; SWEET16 AND SWEET17</scope>
</reference>
<protein>
    <recommendedName>
        <fullName evidence="5">Bidirectional sugar transporter SWEET7</fullName>
        <shortName evidence="5">AtSWEET7</shortName>
    </recommendedName>
    <alternativeName>
        <fullName evidence="5">Protein SUGARS WILL EVENTUALLY BE EXPORTED TRANSPORTERS 7</fullName>
    </alternativeName>
</protein>
<proteinExistence type="evidence at protein level"/>
<feature type="chain" id="PRO_0000404108" description="Bidirectional sugar transporter SWEET7">
    <location>
        <begin position="1"/>
        <end position="258"/>
    </location>
</feature>
<feature type="topological domain" description="Extracellular" evidence="2">
    <location>
        <begin position="1"/>
        <end position="11"/>
    </location>
</feature>
<feature type="transmembrane region" description="Helical; Name=1" evidence="2">
    <location>
        <begin position="12"/>
        <end position="32"/>
    </location>
</feature>
<feature type="topological domain" description="Cytoplasmic" evidence="2">
    <location>
        <begin position="33"/>
        <end position="46"/>
    </location>
</feature>
<feature type="transmembrane region" description="Helical; Name=2" evidence="2">
    <location>
        <begin position="47"/>
        <end position="67"/>
    </location>
</feature>
<feature type="topological domain" description="Extracellular" evidence="2">
    <location>
        <begin position="68"/>
        <end position="73"/>
    </location>
</feature>
<feature type="transmembrane region" description="Helical; Name=3" evidence="2">
    <location>
        <begin position="74"/>
        <end position="94"/>
    </location>
</feature>
<feature type="topological domain" description="Cytoplasmic" evidence="2">
    <location>
        <begin position="95"/>
        <end position="102"/>
    </location>
</feature>
<feature type="transmembrane region" description="Helical; Name=4" evidence="2">
    <location>
        <begin position="103"/>
        <end position="123"/>
    </location>
</feature>
<feature type="topological domain" description="Extracellular" evidence="2">
    <location>
        <begin position="124"/>
        <end position="134"/>
    </location>
</feature>
<feature type="transmembrane region" description="Helical; Name=5" evidence="2">
    <location>
        <begin position="135"/>
        <end position="155"/>
    </location>
</feature>
<feature type="topological domain" description="Cytoplasmic" evidence="2">
    <location>
        <begin position="156"/>
        <end position="166"/>
    </location>
</feature>
<feature type="transmembrane region" description="Helical; Name=6" evidence="2">
    <location>
        <begin position="167"/>
        <end position="187"/>
    </location>
</feature>
<feature type="topological domain" description="Extracellular" evidence="2">
    <location>
        <begin position="188"/>
        <end position="193"/>
    </location>
</feature>
<feature type="transmembrane region" description="Helical; Name=7" evidence="2">
    <location>
        <begin position="194"/>
        <end position="214"/>
    </location>
</feature>
<feature type="topological domain" description="Cytoplasmic" evidence="2">
    <location>
        <begin position="215"/>
        <end position="258"/>
    </location>
</feature>
<feature type="domain" description="MtN3/slv 1">
    <location>
        <begin position="12"/>
        <end position="100"/>
    </location>
</feature>
<feature type="domain" description="MtN3/slv 2">
    <location>
        <begin position="136"/>
        <end position="221"/>
    </location>
</feature>
<evidence type="ECO:0000250" key="1">
    <source>
        <dbReference type="UniProtKB" id="Q8L9J7"/>
    </source>
</evidence>
<evidence type="ECO:0000255" key="2"/>
<evidence type="ECO:0000269" key="3">
    <source>
    </source>
</evidence>
<evidence type="ECO:0000269" key="4">
    <source>
    </source>
</evidence>
<evidence type="ECO:0000303" key="5">
    <source>
    </source>
</evidence>
<evidence type="ECO:0000305" key="6"/>
<sequence length="258" mass="28531">MVFAHLNLLRKIVGIIGNFIALCLFLSPTPTFVRIVKKKSVEEYSPIPYLATLINCLVWVLYGLPTVHPDSTLVITINGTGILIEIVFLTIFFVYCGRQKQRLIISAVIAAETAFIAILAVLVLTLQHTTEKRTMSVGIVCCVFNVMMYASPLSVMKMVIKTKSVEFMPFWLSVAGFLNAGVWTIYALMPFDPFMAIPNGIGCLFGLAQLILYGAYYKSTKRIMAERENQPGYVGLSSAIARTGSEKTANTNQEPNNV</sequence>
<organism>
    <name type="scientific">Arabidopsis thaliana</name>
    <name type="common">Mouse-ear cress</name>
    <dbReference type="NCBI Taxonomy" id="3702"/>
    <lineage>
        <taxon>Eukaryota</taxon>
        <taxon>Viridiplantae</taxon>
        <taxon>Streptophyta</taxon>
        <taxon>Embryophyta</taxon>
        <taxon>Tracheophyta</taxon>
        <taxon>Spermatophyta</taxon>
        <taxon>Magnoliopsida</taxon>
        <taxon>eudicotyledons</taxon>
        <taxon>Gunneridae</taxon>
        <taxon>Pentapetalae</taxon>
        <taxon>rosids</taxon>
        <taxon>malvids</taxon>
        <taxon>Brassicales</taxon>
        <taxon>Brassicaceae</taxon>
        <taxon>Camelineae</taxon>
        <taxon>Arabidopsis</taxon>
    </lineage>
</organism>
<dbReference type="EMBL" id="AF080118">
    <property type="protein sequence ID" value="AAC33960.1"/>
    <property type="status" value="ALT_SEQ"/>
    <property type="molecule type" value="Genomic_DNA"/>
</dbReference>
<dbReference type="EMBL" id="AL049525">
    <property type="protein sequence ID" value="CAB40053.1"/>
    <property type="status" value="ALT_SEQ"/>
    <property type="molecule type" value="Genomic_DNA"/>
</dbReference>
<dbReference type="EMBL" id="AL161518">
    <property type="protein sequence ID" value="CAB81186.1"/>
    <property type="status" value="ALT_SEQ"/>
    <property type="molecule type" value="Genomic_DNA"/>
</dbReference>
<dbReference type="EMBL" id="CP002687">
    <property type="protein sequence ID" value="AEE82936.1"/>
    <property type="molecule type" value="Genomic_DNA"/>
</dbReference>
<dbReference type="EMBL" id="AY087237">
    <property type="protein sequence ID" value="AAM64793.1"/>
    <property type="molecule type" value="mRNA"/>
</dbReference>
<dbReference type="EMBL" id="BT029344">
    <property type="protein sequence ID" value="ABK32158.1"/>
    <property type="molecule type" value="mRNA"/>
</dbReference>
<dbReference type="PIR" id="T01891">
    <property type="entry name" value="T01891"/>
</dbReference>
<dbReference type="PIR" id="T04280">
    <property type="entry name" value="T04280"/>
</dbReference>
<dbReference type="RefSeq" id="NP_567366.1">
    <property type="nucleotide sequence ID" value="NM_117154.4"/>
</dbReference>
<dbReference type="SMR" id="Q8LBF7"/>
<dbReference type="BioGRID" id="11981">
    <property type="interactions" value="30"/>
</dbReference>
<dbReference type="FunCoup" id="Q8LBF7">
    <property type="interactions" value="456"/>
</dbReference>
<dbReference type="IntAct" id="Q8LBF7">
    <property type="interactions" value="25"/>
</dbReference>
<dbReference type="STRING" id="3702.Q8LBF7"/>
<dbReference type="TCDB" id="2.A.123.1.30">
    <property type="family name" value="the sweet, pq-loop, saliva, mtn3 (sweet) family"/>
</dbReference>
<dbReference type="PaxDb" id="3702-AT4G10850.1"/>
<dbReference type="ProteomicsDB" id="226535"/>
<dbReference type="EnsemblPlants" id="AT4G10850.1">
    <property type="protein sequence ID" value="AT4G10850.1"/>
    <property type="gene ID" value="AT4G10850"/>
</dbReference>
<dbReference type="GeneID" id="826682"/>
<dbReference type="Gramene" id="AT4G10850.1">
    <property type="protein sequence ID" value="AT4G10850.1"/>
    <property type="gene ID" value="AT4G10850"/>
</dbReference>
<dbReference type="KEGG" id="ath:AT4G10850"/>
<dbReference type="Araport" id="AT4G10850"/>
<dbReference type="TAIR" id="AT4G10850">
    <property type="gene designation" value="SWEET7"/>
</dbReference>
<dbReference type="eggNOG" id="KOG1623">
    <property type="taxonomic scope" value="Eukaryota"/>
</dbReference>
<dbReference type="HOGENOM" id="CLU_048643_1_0_1"/>
<dbReference type="InParanoid" id="Q8LBF7"/>
<dbReference type="OMA" id="TFVTIWK"/>
<dbReference type="PhylomeDB" id="Q8LBF7"/>
<dbReference type="PRO" id="PR:Q8LBF7"/>
<dbReference type="Proteomes" id="UP000006548">
    <property type="component" value="Chromosome 4"/>
</dbReference>
<dbReference type="ExpressionAtlas" id="Q8LBF7">
    <property type="expression patterns" value="baseline and differential"/>
</dbReference>
<dbReference type="GO" id="GO:0005886">
    <property type="term" value="C:plasma membrane"/>
    <property type="evidence" value="ECO:0000250"/>
    <property type="project" value="UniProtKB"/>
</dbReference>
<dbReference type="GO" id="GO:0051119">
    <property type="term" value="F:sugar transmembrane transporter activity"/>
    <property type="evidence" value="ECO:0000250"/>
    <property type="project" value="UniProtKB"/>
</dbReference>
<dbReference type="FunFam" id="1.20.1280.290:FF:000001">
    <property type="entry name" value="Bidirectional sugar transporter SWEET"/>
    <property type="match status" value="1"/>
</dbReference>
<dbReference type="FunFam" id="1.20.1280.290:FF:000002">
    <property type="entry name" value="Bidirectional sugar transporter SWEET"/>
    <property type="match status" value="1"/>
</dbReference>
<dbReference type="Gene3D" id="1.20.1280.290">
    <property type="match status" value="2"/>
</dbReference>
<dbReference type="InterPro" id="IPR047664">
    <property type="entry name" value="SWEET"/>
</dbReference>
<dbReference type="InterPro" id="IPR004316">
    <property type="entry name" value="SWEET_rpt"/>
</dbReference>
<dbReference type="PANTHER" id="PTHR10791:SF130">
    <property type="entry name" value="BIDIRECTIONAL SUGAR TRANSPORTER SWEET6-RELATED"/>
    <property type="match status" value="1"/>
</dbReference>
<dbReference type="PANTHER" id="PTHR10791">
    <property type="entry name" value="RAG1-ACTIVATING PROTEIN 1"/>
    <property type="match status" value="1"/>
</dbReference>
<dbReference type="Pfam" id="PF03083">
    <property type="entry name" value="MtN3_slv"/>
    <property type="match status" value="2"/>
</dbReference>